<evidence type="ECO:0000250" key="1">
    <source>
        <dbReference type="UniProtKB" id="P49040"/>
    </source>
</evidence>
<evidence type="ECO:0000269" key="2">
    <source>
    </source>
</evidence>
<evidence type="ECO:0000269" key="3">
    <source>
    </source>
</evidence>
<evidence type="ECO:0000269" key="4">
    <source>
    </source>
</evidence>
<evidence type="ECO:0000305" key="5"/>
<keyword id="KW-0903">Direct protein sequencing</keyword>
<keyword id="KW-0328">Glycosyltransferase</keyword>
<keyword id="KW-0808">Transferase</keyword>
<proteinExistence type="evidence at protein level"/>
<accession>P31923</accession>
<accession>P83182</accession>
<accession>Q9ZR49</accession>
<organism>
    <name type="scientific">Hordeum vulgare</name>
    <name type="common">Barley</name>
    <dbReference type="NCBI Taxonomy" id="4513"/>
    <lineage>
        <taxon>Eukaryota</taxon>
        <taxon>Viridiplantae</taxon>
        <taxon>Streptophyta</taxon>
        <taxon>Embryophyta</taxon>
        <taxon>Tracheophyta</taxon>
        <taxon>Spermatophyta</taxon>
        <taxon>Magnoliopsida</taxon>
        <taxon>Liliopsida</taxon>
        <taxon>Poales</taxon>
        <taxon>Poaceae</taxon>
        <taxon>BOP clade</taxon>
        <taxon>Pooideae</taxon>
        <taxon>Triticodae</taxon>
        <taxon>Triticeae</taxon>
        <taxon>Hordeinae</taxon>
        <taxon>Hordeum</taxon>
    </lineage>
</organism>
<comment type="function">
    <text evidence="3">Sucrose-cleaving enzyme that provides UDP-glucose and fructose for various metabolic pathways.</text>
</comment>
<comment type="catalytic activity">
    <reaction evidence="3">
        <text>an NDP-alpha-D-glucose + D-fructose = a ribonucleoside 5'-diphosphate + sucrose + H(+)</text>
        <dbReference type="Rhea" id="RHEA:16241"/>
        <dbReference type="ChEBI" id="CHEBI:15378"/>
        <dbReference type="ChEBI" id="CHEBI:17992"/>
        <dbReference type="ChEBI" id="CHEBI:37721"/>
        <dbReference type="ChEBI" id="CHEBI:57930"/>
        <dbReference type="ChEBI" id="CHEBI:76533"/>
        <dbReference type="EC" id="2.4.1.13"/>
    </reaction>
</comment>
<comment type="subunit">
    <text evidence="2">Forms homotetramers and heterotetramers with SS1, all three possible heterotetramers are formed.</text>
</comment>
<comment type="tissue specificity">
    <text evidence="2 4">Abundant in developing endosperm, low in aleurone, and undetected in coleoptiles and roots. Also detected in crude extracts of anthers and in immature embryos.</text>
</comment>
<comment type="developmental stage">
    <text evidence="3">Activity increases as seeds develop.</text>
</comment>
<comment type="similarity">
    <text evidence="5">Belongs to the glycosyltransferase 1 family. Plant sucrose synthase subfamily.</text>
</comment>
<comment type="sequence caution" evidence="5">
    <conflict type="frameshift">
        <sequence resource="EMBL-CDS" id="CAA75793"/>
    </conflict>
</comment>
<sequence>MGETAGERALSRVHSVRERIGHSLSAHTNELVAVFSRLVNQGKGMLQPHQITAEYNAAIPEAEREKLKNTPFEDLLRGAQEAIVIPPWVALAIRPRPGVWEYVRVNVSELGVEELSVLRYLQFKEQLANGSTDNNFVLELDFGPFNASFPRPSLSKSIGNGVQFLNRHLSSKLFHDKESMYPLLNFLRAHNYKGMTMMLNDRIRSLGTLQGALRKAETHLSGLPADTPYTEFHHRFQELGLEKGWGDCAQRASETIHLLLDLLEAPDPSSLEKFLGTIPMVLNVVILSPHGYFAQANVLGYPDTGGQVVYILDQVRAMENEMLLRIKQQGLDITPKILIVTRMLPDAHGTTCGQRLEKVLGTEHTHILRVPFKTEDGIVRKWISRFEVWPYLEAYTDDVAHEIAGELQANPDLIIGNYSDGNLVACLLAHKLGVTHCTIAHALEKTKYPNSDLYWKKFEDHYHFSCQFTADLIAMNHADFIITSTFQEIAGNKDTVGQYESHMAFTMPGLYRVVHGIDVFDPKFNIVSPGADMSIYFPYTEQQKRLTSLHTEIEELLFSDVENAEHKFVLKDKKKPIIFSMARLDRVKNMTGLVEMYGRNPRLQELVNLVVVCGDHGKVSKDKEEQVEFKKMFDLIEKYNLSGHIRWISAQMNRVRNGELYRYICDMKGAFVQPAFYEAFGLTVIEAMTCGLPTFATAYGGPAEIIVNGVSGYHIDPYQNDKASALLVGFFGKCQEDPSHWNKISQGGLQRIEEKYTWKLYSERLMTLSGVYGFWKYVSNLDRRETRRYLEMLYALKYRKMAATVPLAVEGETSGE</sequence>
<feature type="chain" id="PRO_0000204650" description="Sucrose synthase 2">
    <location>
        <begin position="1"/>
        <end position="816"/>
    </location>
</feature>
<feature type="region of interest" description="GT-B glycosyltransferase" evidence="1">
    <location>
        <begin position="280"/>
        <end position="757"/>
    </location>
</feature>
<feature type="sequence conflict" description="In Ref. 2; CAA75793." evidence="5" ref="2">
    <original>S</original>
    <variation>R</variation>
    <location>
        <position position="131"/>
    </location>
</feature>
<feature type="sequence conflict" description="In Ref. 2; CAA75793." evidence="5" ref="2">
    <original>T</original>
    <variation>A</variation>
    <location>
        <position position="196"/>
    </location>
</feature>
<feature type="sequence conflict" description="In Ref. 2; CAA75793." evidence="5" ref="2">
    <original>T</original>
    <variation>S</variation>
    <location>
        <position position="230"/>
    </location>
</feature>
<feature type="sequence conflict" description="In Ref. 2; CAA75793." evidence="5" ref="2">
    <original>L</original>
    <variation>F</variation>
    <location>
        <position position="282"/>
    </location>
</feature>
<feature type="sequence conflict" description="In Ref. 2; CAA75793." evidence="5" ref="2">
    <original>C</original>
    <variation>G</variation>
    <location>
        <position position="437"/>
    </location>
</feature>
<feature type="sequence conflict" description="In Ref. 2; CAA75793." evidence="5" ref="2">
    <original>N</original>
    <variation>K</variation>
    <location>
        <position position="492"/>
    </location>
</feature>
<feature type="sequence conflict" description="In Ref. 2; CAA75793." evidence="5" ref="2">
    <original>P</original>
    <variation>A</variation>
    <location>
        <position position="674"/>
    </location>
</feature>
<feature type="sequence conflict" description="In Ref. 2; CAA75793." evidence="5" ref="2">
    <original>G</original>
    <variation>D</variation>
    <location>
        <position position="729"/>
    </location>
</feature>
<protein>
    <recommendedName>
        <fullName>Sucrose synthase 2</fullName>
        <ecNumber>2.4.1.13</ecNumber>
    </recommendedName>
    <alternativeName>
        <fullName>Sucrose-UDP glucosyltransferase 2</fullName>
    </alternativeName>
</protein>
<reference key="1">
    <citation type="journal article" date="1993" name="FEBS Lett.">
        <title>Sucrose synthase genes in barley. cDNA cloning of the Ss2 type and tissue-specific expression of Ss1 and Ss2.</title>
        <authorList>
            <person name="Martinez de Ilarduya O."/>
            <person name="Vicente-Carbajosa J."/>
            <person name="Sanchez de la Hoz P."/>
            <person name="Carbonero P."/>
        </authorList>
    </citation>
    <scope>NUCLEOTIDE SEQUENCE [MRNA]</scope>
    <scope>TISSUE SPECIFICITY</scope>
    <source>
        <strain>cv. Sundance</strain>
        <tissue>Endosperm</tissue>
    </source>
</reference>
<reference key="2">
    <citation type="submission" date="1997-12" db="EMBL/GenBank/DDBJ databases">
        <title>Complete barley sucrose synthase type II.</title>
        <authorList>
            <person name="Acevedo F."/>
            <person name="Martinez de Ilarduya O."/>
            <person name="Guerin J."/>
            <person name="Diaz I."/>
            <person name="Carbonero P."/>
        </authorList>
    </citation>
    <scope>NUCLEOTIDE SEQUENCE [GENOMIC DNA]</scope>
    <source>
        <strain>cv. Sundance</strain>
        <tissue>Endosperm</tissue>
    </source>
</reference>
<reference key="3">
    <citation type="submission" date="2001-11" db="UniProtKB">
        <authorList>
            <person name="Baroja-Fernandez E."/>
            <person name="Munoz F.J."/>
            <person name="Saikusa T."/>
            <person name="Bastarrica-Berasategui A."/>
            <person name="Moreno-Bruna B."/>
            <person name="Zandueta-Criado A."/>
            <person name="Rodriguez-Lopez M."/>
            <person name="Akazawa T."/>
            <person name="Pozueta-Romero J."/>
        </authorList>
    </citation>
    <scope>PROTEIN SEQUENCE OF 232-238 AND 393-402</scope>
    <source>
        <strain>cv. Scarlet</strain>
        <tissue>Endosperm</tissue>
    </source>
</reference>
<reference key="4">
    <citation type="journal article" date="1997" name="Plant Physiol.">
        <title>The spatial distribution of sucrose synthase isozymes in barley.</title>
        <authorList>
            <person name="Guerin J."/>
            <person name="Carbonero P."/>
        </authorList>
    </citation>
    <scope>SUBUNIT</scope>
    <scope>TISSUE SPECIFICITY</scope>
</reference>
<reference key="5">
    <citation type="journal article" date="2003" name="Plant Cell Physiol.">
        <title>Sucrose synthase catalyzes the de novo production of ADPglucose linked to starch biosynthesis in heterotrophic tissues of plants.</title>
        <authorList>
            <person name="Baroja-Fernandez E."/>
            <person name="Munoz F.J."/>
            <person name="Saikusa T."/>
            <person name="Rodriguez-Lopez M."/>
            <person name="Akazawa T."/>
            <person name="Pozueta-Romero J."/>
        </authorList>
    </citation>
    <scope>FUNCTION</scope>
    <scope>CATALYTIC ACTIVITY</scope>
    <scope>DEVELOPMENTAL STAGE</scope>
</reference>
<name>SUS2_HORVU</name>
<gene>
    <name type="primary">SS2</name>
</gene>
<dbReference type="EC" id="2.4.1.13"/>
<dbReference type="EMBL" id="X69931">
    <property type="protein sequence ID" value="CAA49551.1"/>
    <property type="molecule type" value="mRNA"/>
</dbReference>
<dbReference type="EMBL" id="Y15802">
    <property type="protein sequence ID" value="CAA75793.1"/>
    <property type="status" value="ALT_FRAME"/>
    <property type="molecule type" value="Genomic_DNA"/>
</dbReference>
<dbReference type="PIR" id="S32451">
    <property type="entry name" value="S32451"/>
</dbReference>
<dbReference type="SMR" id="P31923"/>
<dbReference type="IntAct" id="P31923">
    <property type="interactions" value="1"/>
</dbReference>
<dbReference type="CAZy" id="GT4">
    <property type="family name" value="Glycosyltransferase Family 4"/>
</dbReference>
<dbReference type="SABIO-RK" id="P31923"/>
<dbReference type="ExpressionAtlas" id="P31923">
    <property type="expression patterns" value="baseline and differential"/>
</dbReference>
<dbReference type="GO" id="GO:0016157">
    <property type="term" value="F:sucrose synthase activity"/>
    <property type="evidence" value="ECO:0007669"/>
    <property type="project" value="UniProtKB-EC"/>
</dbReference>
<dbReference type="GO" id="GO:0005985">
    <property type="term" value="P:sucrose metabolic process"/>
    <property type="evidence" value="ECO:0007669"/>
    <property type="project" value="InterPro"/>
</dbReference>
<dbReference type="FunFam" id="1.20.120.1230:FF:000001">
    <property type="entry name" value="Sucrose synthase"/>
    <property type="match status" value="1"/>
</dbReference>
<dbReference type="FunFam" id="3.10.450.330:FF:000001">
    <property type="entry name" value="Sucrose synthase"/>
    <property type="match status" value="1"/>
</dbReference>
<dbReference type="FunFam" id="3.40.50.2000:FF:000004">
    <property type="entry name" value="Sucrose synthase"/>
    <property type="match status" value="1"/>
</dbReference>
<dbReference type="Gene3D" id="1.20.120.1230">
    <property type="match status" value="1"/>
</dbReference>
<dbReference type="Gene3D" id="3.10.450.330">
    <property type="match status" value="1"/>
</dbReference>
<dbReference type="Gene3D" id="3.40.50.2000">
    <property type="entry name" value="Glycogen Phosphorylase B"/>
    <property type="match status" value="2"/>
</dbReference>
<dbReference type="InterPro" id="IPR001296">
    <property type="entry name" value="Glyco_trans_1"/>
</dbReference>
<dbReference type="InterPro" id="IPR000368">
    <property type="entry name" value="Sucrose_synth_GT-B1"/>
</dbReference>
<dbReference type="InterPro" id="IPR012820">
    <property type="entry name" value="Sucrose_synthase_pln/cyn"/>
</dbReference>
<dbReference type="InterPro" id="IPR056736">
    <property type="entry name" value="SUS_EPBD"/>
</dbReference>
<dbReference type="InterPro" id="IPR056735">
    <property type="entry name" value="SUS_N"/>
</dbReference>
<dbReference type="NCBIfam" id="TIGR02470">
    <property type="entry name" value="sucr_synth"/>
    <property type="match status" value="1"/>
</dbReference>
<dbReference type="PANTHER" id="PTHR45839">
    <property type="match status" value="1"/>
</dbReference>
<dbReference type="PANTHER" id="PTHR45839:SF5">
    <property type="entry name" value="SUCROSE SYNTHASE 3"/>
    <property type="match status" value="1"/>
</dbReference>
<dbReference type="Pfam" id="PF00534">
    <property type="entry name" value="Glycos_transf_1"/>
    <property type="match status" value="1"/>
</dbReference>
<dbReference type="Pfam" id="PF00862">
    <property type="entry name" value="GT-B_Sucrose_synth"/>
    <property type="match status" value="1"/>
</dbReference>
<dbReference type="Pfam" id="PF24862">
    <property type="entry name" value="SUS_EPBD"/>
    <property type="match status" value="1"/>
</dbReference>
<dbReference type="Pfam" id="PF24861">
    <property type="entry name" value="SUS_N"/>
    <property type="match status" value="1"/>
</dbReference>
<dbReference type="SUPFAM" id="SSF53756">
    <property type="entry name" value="UDP-Glycosyltransferase/glycogen phosphorylase"/>
    <property type="match status" value="1"/>
</dbReference>